<dbReference type="EMBL" id="AF009224">
    <property type="protein sequence ID" value="AAC46425.1"/>
    <property type="molecule type" value="Genomic_DNA"/>
</dbReference>
<dbReference type="EMBL" id="CR543861">
    <property type="protein sequence ID" value="CAG68298.1"/>
    <property type="molecule type" value="Genomic_DNA"/>
</dbReference>
<dbReference type="RefSeq" id="WP_004925503.1">
    <property type="nucleotide sequence ID" value="NC_005966.1"/>
</dbReference>
<dbReference type="SMR" id="O30513"/>
<dbReference type="STRING" id="202950.GCA_001485005_01189"/>
<dbReference type="TCDB" id="2.A.1.15.5">
    <property type="family name" value="the major facilitator superfamily (mfs)"/>
</dbReference>
<dbReference type="GeneID" id="45233847"/>
<dbReference type="KEGG" id="aci:ACIAD1434"/>
<dbReference type="eggNOG" id="COG2814">
    <property type="taxonomic scope" value="Bacteria"/>
</dbReference>
<dbReference type="HOGENOM" id="CLU_001265_46_4_6"/>
<dbReference type="OrthoDB" id="7066727at2"/>
<dbReference type="BioCyc" id="ASP62977:ACIAD_RS06625-MONOMER"/>
<dbReference type="Proteomes" id="UP000000430">
    <property type="component" value="Chromosome"/>
</dbReference>
<dbReference type="GO" id="GO:0005886">
    <property type="term" value="C:plasma membrane"/>
    <property type="evidence" value="ECO:0007669"/>
    <property type="project" value="UniProtKB-SubCell"/>
</dbReference>
<dbReference type="GO" id="GO:0046943">
    <property type="term" value="F:carboxylic acid transmembrane transporter activity"/>
    <property type="evidence" value="ECO:0007669"/>
    <property type="project" value="TreeGrafter"/>
</dbReference>
<dbReference type="CDD" id="cd17365">
    <property type="entry name" value="MFS_PcaK_like"/>
    <property type="match status" value="1"/>
</dbReference>
<dbReference type="Gene3D" id="1.20.1250.20">
    <property type="entry name" value="MFS general substrate transporter like domains"/>
    <property type="match status" value="1"/>
</dbReference>
<dbReference type="InterPro" id="IPR011701">
    <property type="entry name" value="MFS"/>
</dbReference>
<dbReference type="InterPro" id="IPR004746">
    <property type="entry name" value="MFS_AAHS"/>
</dbReference>
<dbReference type="InterPro" id="IPR020846">
    <property type="entry name" value="MFS_dom"/>
</dbReference>
<dbReference type="InterPro" id="IPR036259">
    <property type="entry name" value="MFS_trans_sf"/>
</dbReference>
<dbReference type="InterPro" id="IPR005829">
    <property type="entry name" value="Sugar_transporter_CS"/>
</dbReference>
<dbReference type="NCBIfam" id="TIGR00895">
    <property type="entry name" value="2A0115"/>
    <property type="match status" value="1"/>
</dbReference>
<dbReference type="PANTHER" id="PTHR23508">
    <property type="entry name" value="CARBOXYLIC ACID TRANSPORTER PROTEIN HOMOLOG"/>
    <property type="match status" value="1"/>
</dbReference>
<dbReference type="PANTHER" id="PTHR23508:SF10">
    <property type="entry name" value="CARBOXYLIC ACID TRANSPORTER PROTEIN HOMOLOG"/>
    <property type="match status" value="1"/>
</dbReference>
<dbReference type="Pfam" id="PF07690">
    <property type="entry name" value="MFS_1"/>
    <property type="match status" value="1"/>
</dbReference>
<dbReference type="SUPFAM" id="SSF103473">
    <property type="entry name" value="MFS general substrate transporter"/>
    <property type="match status" value="1"/>
</dbReference>
<dbReference type="PROSITE" id="PS50850">
    <property type="entry name" value="MFS"/>
    <property type="match status" value="1"/>
</dbReference>
<proteinExistence type="inferred from homology"/>
<organism>
    <name type="scientific">Acinetobacter baylyi (strain ATCC 33305 / BD413 / ADP1)</name>
    <dbReference type="NCBI Taxonomy" id="62977"/>
    <lineage>
        <taxon>Bacteria</taxon>
        <taxon>Pseudomonadati</taxon>
        <taxon>Pseudomonadota</taxon>
        <taxon>Gammaproteobacteria</taxon>
        <taxon>Moraxellales</taxon>
        <taxon>Moraxellaceae</taxon>
        <taxon>Acinetobacter</taxon>
    </lineage>
</organism>
<accession>O30513</accession>
<accession>Q6FCB3</accession>
<sequence>MSREINVNQMIDDSKLTPFHWRVIILSTLIIIFDGYDLVIYGVALPLLMKEWAIDPVTAGFIGSIALFGMMFGALIFGTIADKLEHLGVSRKKVIAVCIILFSLCTVLCGFSETTTQFSIFRFLAGVGIGGVMPNVIALVSEYAPKKFKSFFVTLMFSGYAIGGMTAAFLGSILVPLYGWKIMFMIAGIPLVLLLPLMKVLPESIDYLVRKKKDETVRFIMTKMVPSYQYQPDHVFVLNSSNQNQAQAPVKMIFQEQRAFSTMMFWCSIFMTLIMVYALGNWLPKLMIEAGYNLSKSLIFLFSLNVGGMIGSILGGYLADRYNVKFVTMGLLLLGAISLSLLSFQFSSVILYILIACAGAASIGAQIMLLAYMAKFYAPNVRSTGIGWGLGMGRVGAILGPILTGWLLSLQLPHFYNFLALSIPAVLGIVTVFLINDRRMYQPEPISPIANQNDTTTVKVNEAVSH</sequence>
<protein>
    <recommendedName>
        <fullName>Benzoate transport protein</fullName>
    </recommendedName>
</protein>
<comment type="function">
    <text>Probable uptake of benzoate.</text>
</comment>
<comment type="subcellular location">
    <subcellularLocation>
        <location evidence="2">Cell inner membrane</location>
        <topology evidence="2">Multi-pass membrane protein</topology>
    </subcellularLocation>
</comment>
<comment type="similarity">
    <text evidence="2">Belongs to the major facilitator superfamily. Aromatic acid:H(+) symporter (AAHS) (TC 2.A.1.15) family.</text>
</comment>
<reference key="1">
    <citation type="journal article" date="1997" name="J. Bacteriol.">
        <title>benK encodes a hydrophobic permease-like protein involved in benzoate degradation by Acinetobacter sp. strain ADP1.</title>
        <authorList>
            <person name="Collier L.S."/>
            <person name="Nichols N.N."/>
            <person name="Neidle E.L."/>
        </authorList>
    </citation>
    <scope>NUCLEOTIDE SEQUENCE [GENOMIC DNA]</scope>
</reference>
<reference key="2">
    <citation type="journal article" date="2004" name="Nucleic Acids Res.">
        <title>Unique features revealed by the genome sequence of Acinetobacter sp. ADP1, a versatile and naturally transformation competent bacterium.</title>
        <authorList>
            <person name="Barbe V."/>
            <person name="Vallenet D."/>
            <person name="Fonknechten N."/>
            <person name="Kreimeyer A."/>
            <person name="Oztas S."/>
            <person name="Labarre L."/>
            <person name="Cruveiller S."/>
            <person name="Robert C."/>
            <person name="Duprat S."/>
            <person name="Wincker P."/>
            <person name="Ornston L.N."/>
            <person name="Weissenbach J."/>
            <person name="Marliere P."/>
            <person name="Cohen G.N."/>
            <person name="Medigue C."/>
        </authorList>
    </citation>
    <scope>NUCLEOTIDE SEQUENCE [LARGE SCALE GENOMIC DNA]</scope>
    <source>
        <strain>ATCC 33305 / BD413 / ADP1</strain>
    </source>
</reference>
<evidence type="ECO:0000255" key="1"/>
<evidence type="ECO:0000305" key="2"/>
<keyword id="KW-0997">Cell inner membrane</keyword>
<keyword id="KW-1003">Cell membrane</keyword>
<keyword id="KW-0472">Membrane</keyword>
<keyword id="KW-0812">Transmembrane</keyword>
<keyword id="KW-1133">Transmembrane helix</keyword>
<keyword id="KW-0813">Transport</keyword>
<name>BENK_ACIAD</name>
<feature type="chain" id="PRO_0000050297" description="Benzoate transport protein">
    <location>
        <begin position="1"/>
        <end position="466"/>
    </location>
</feature>
<feature type="topological domain" description="Cytoplasmic" evidence="1">
    <location>
        <begin position="1"/>
        <end position="22"/>
    </location>
</feature>
<feature type="transmembrane region" description="Helical; Name=1" evidence="1">
    <location>
        <begin position="23"/>
        <end position="43"/>
    </location>
</feature>
<feature type="topological domain" description="Periplasmic" evidence="1">
    <location>
        <begin position="44"/>
        <end position="60"/>
    </location>
</feature>
<feature type="transmembrane region" description="Helical; Name=2" evidence="1">
    <location>
        <begin position="61"/>
        <end position="81"/>
    </location>
</feature>
<feature type="topological domain" description="Cytoplasmic" evidence="1">
    <location>
        <begin position="82"/>
        <end position="93"/>
    </location>
</feature>
<feature type="transmembrane region" description="Helical; Name=3" evidence="1">
    <location>
        <begin position="94"/>
        <end position="114"/>
    </location>
</feature>
<feature type="topological domain" description="Periplasmic" evidence="1">
    <location>
        <begin position="115"/>
        <end position="119"/>
    </location>
</feature>
<feature type="transmembrane region" description="Helical; Name=4" evidence="1">
    <location>
        <begin position="120"/>
        <end position="140"/>
    </location>
</feature>
<feature type="topological domain" description="Cytoplasmic" evidence="1">
    <location>
        <begin position="141"/>
        <end position="150"/>
    </location>
</feature>
<feature type="transmembrane region" description="Helical; Name=5" evidence="1">
    <location>
        <begin position="151"/>
        <end position="171"/>
    </location>
</feature>
<feature type="topological domain" description="Periplasmic" evidence="1">
    <location>
        <begin position="172"/>
        <end position="181"/>
    </location>
</feature>
<feature type="transmembrane region" description="Helical; Name=6" evidence="1">
    <location>
        <begin position="182"/>
        <end position="202"/>
    </location>
</feature>
<feature type="topological domain" description="Cytoplasmic" evidence="1">
    <location>
        <begin position="203"/>
        <end position="258"/>
    </location>
</feature>
<feature type="transmembrane region" description="Helical; Name=7" evidence="1">
    <location>
        <begin position="259"/>
        <end position="279"/>
    </location>
</feature>
<feature type="topological domain" description="Periplasmic" evidence="1">
    <location>
        <begin position="280"/>
        <end position="297"/>
    </location>
</feature>
<feature type="transmembrane region" description="Helical; Name=8" evidence="1">
    <location>
        <begin position="298"/>
        <end position="318"/>
    </location>
</feature>
<feature type="topological domain" description="Cytoplasmic" evidence="1">
    <location>
        <begin position="319"/>
        <end position="325"/>
    </location>
</feature>
<feature type="transmembrane region" description="Helical; Name=9" evidence="1">
    <location>
        <begin position="326"/>
        <end position="346"/>
    </location>
</feature>
<feature type="topological domain" description="Periplasmic" evidence="1">
    <location>
        <begin position="347"/>
        <end position="348"/>
    </location>
</feature>
<feature type="transmembrane region" description="Helical; Name=10" evidence="1">
    <location>
        <begin position="349"/>
        <end position="369"/>
    </location>
</feature>
<feature type="topological domain" description="Cytoplasmic" evidence="1">
    <location>
        <begin position="370"/>
        <end position="387"/>
    </location>
</feature>
<feature type="transmembrane region" description="Helical; Name=11" evidence="1">
    <location>
        <begin position="388"/>
        <end position="408"/>
    </location>
</feature>
<feature type="topological domain" description="Periplasmic" evidence="1">
    <location>
        <begin position="409"/>
        <end position="414"/>
    </location>
</feature>
<feature type="transmembrane region" description="Helical; Name=12" evidence="1">
    <location>
        <begin position="415"/>
        <end position="435"/>
    </location>
</feature>
<feature type="topological domain" description="Cytoplasmic" evidence="1">
    <location>
        <begin position="436"/>
        <end position="466"/>
    </location>
</feature>
<feature type="sequence conflict" description="In Ref. 1; AAC46425." evidence="2" ref="1">
    <original>K</original>
    <variation>E</variation>
    <location>
        <position position="199"/>
    </location>
</feature>
<gene>
    <name type="primary">benK</name>
    <name type="ordered locus">ACIAD1434</name>
</gene>